<keyword id="KW-0027">Amidation</keyword>
<keyword id="KW-0165">Cleavage on pair of basic residues</keyword>
<keyword id="KW-0372">Hormone</keyword>
<keyword id="KW-1185">Reference proteome</keyword>
<keyword id="KW-0964">Secreted</keyword>
<keyword id="KW-0732">Signal</keyword>
<keyword id="KW-0765">Sulfation</keyword>
<gene>
    <name type="primary">cck</name>
</gene>
<protein>
    <recommendedName>
        <fullName>Cholecystokinin</fullName>
    </recommendedName>
    <alternativeName>
        <fullName>CCK8</fullName>
    </alternativeName>
    <component>
        <recommendedName>
            <fullName>Cholecystokinin-8</fullName>
            <shortName>CCK8</shortName>
        </recommendedName>
    </component>
    <component>
        <recommendedName>
            <fullName>Cholecystokinin-12</fullName>
            <shortName>CCK12</shortName>
        </recommendedName>
    </component>
    <component>
        <recommendedName>
            <fullName>Cholecystokinin-26</fullName>
            <shortName>CCK26</shortName>
        </recommendedName>
    </component>
    <component>
        <recommendedName>
            <fullName>Cholecystokinin-36</fullName>
            <shortName>CCK36</shortName>
        </recommendedName>
    </component>
    <component>
        <recommendedName>
            <fullName>Cholecystokinin-69</fullName>
            <shortName>CCK69</shortName>
        </recommendedName>
    </component>
</protein>
<organism>
    <name type="scientific">Carassius auratus</name>
    <name type="common">Goldfish</name>
    <dbReference type="NCBI Taxonomy" id="7957"/>
    <lineage>
        <taxon>Eukaryota</taxon>
        <taxon>Metazoa</taxon>
        <taxon>Chordata</taxon>
        <taxon>Craniata</taxon>
        <taxon>Vertebrata</taxon>
        <taxon>Euteleostomi</taxon>
        <taxon>Actinopterygii</taxon>
        <taxon>Neopterygii</taxon>
        <taxon>Teleostei</taxon>
        <taxon>Ostariophysi</taxon>
        <taxon>Cypriniformes</taxon>
        <taxon>Cyprinidae</taxon>
        <taxon>Cyprininae</taxon>
        <taxon>Carassius</taxon>
    </lineage>
</organism>
<dbReference type="EMBL" id="U70865">
    <property type="protein sequence ID" value="AAC24727.1"/>
    <property type="molecule type" value="mRNA"/>
</dbReference>
<dbReference type="OrthoDB" id="9862982at2759"/>
<dbReference type="Proteomes" id="UP000515129">
    <property type="component" value="Unplaced"/>
</dbReference>
<dbReference type="GO" id="GO:0030424">
    <property type="term" value="C:axon"/>
    <property type="evidence" value="ECO:0007669"/>
    <property type="project" value="TreeGrafter"/>
</dbReference>
<dbReference type="GO" id="GO:0005615">
    <property type="term" value="C:extracellular space"/>
    <property type="evidence" value="ECO:0007669"/>
    <property type="project" value="TreeGrafter"/>
</dbReference>
<dbReference type="GO" id="GO:0005179">
    <property type="term" value="F:hormone activity"/>
    <property type="evidence" value="ECO:0000250"/>
    <property type="project" value="UniProtKB"/>
</dbReference>
<dbReference type="GO" id="GO:0005184">
    <property type="term" value="F:neuropeptide hormone activity"/>
    <property type="evidence" value="ECO:0007669"/>
    <property type="project" value="InterPro"/>
</dbReference>
<dbReference type="GO" id="GO:0007586">
    <property type="term" value="P:digestion"/>
    <property type="evidence" value="ECO:0007669"/>
    <property type="project" value="InterPro"/>
</dbReference>
<dbReference type="GO" id="GO:0007631">
    <property type="term" value="P:feeding behavior"/>
    <property type="evidence" value="ECO:0000314"/>
    <property type="project" value="UniProtKB"/>
</dbReference>
<dbReference type="GO" id="GO:0030252">
    <property type="term" value="P:growth hormone secretion"/>
    <property type="evidence" value="ECO:0000314"/>
    <property type="project" value="UniProtKB"/>
</dbReference>
<dbReference type="GO" id="GO:0030072">
    <property type="term" value="P:peptide hormone secretion"/>
    <property type="evidence" value="ECO:0000314"/>
    <property type="project" value="UniProtKB"/>
</dbReference>
<dbReference type="InterPro" id="IPR015499">
    <property type="entry name" value="CCK-like"/>
</dbReference>
<dbReference type="InterPro" id="IPR001651">
    <property type="entry name" value="Gastrin/CCK"/>
</dbReference>
<dbReference type="InterPro" id="IPR013152">
    <property type="entry name" value="Gastrin/cholecystokinin_CS"/>
</dbReference>
<dbReference type="PANTHER" id="PTHR10786">
    <property type="entry name" value="CHOLECYSTOKININ"/>
    <property type="match status" value="1"/>
</dbReference>
<dbReference type="PANTHER" id="PTHR10786:SF0">
    <property type="entry name" value="CHOLECYSTOKININ"/>
    <property type="match status" value="1"/>
</dbReference>
<dbReference type="Pfam" id="PF00918">
    <property type="entry name" value="Gastrin"/>
    <property type="match status" value="1"/>
</dbReference>
<dbReference type="SMART" id="SM00029">
    <property type="entry name" value="GASTRIN"/>
    <property type="match status" value="1"/>
</dbReference>
<dbReference type="PROSITE" id="PS00259">
    <property type="entry name" value="GASTRIN"/>
    <property type="match status" value="1"/>
</dbReference>
<evidence type="ECO:0000250" key="1"/>
<evidence type="ECO:0000250" key="2">
    <source>
        <dbReference type="UniProtKB" id="P01356"/>
    </source>
</evidence>
<evidence type="ECO:0000255" key="3"/>
<evidence type="ECO:0000256" key="4">
    <source>
        <dbReference type="SAM" id="MobiDB-lite"/>
    </source>
</evidence>
<evidence type="ECO:0000269" key="5">
    <source>
    </source>
</evidence>
<evidence type="ECO:0000269" key="6">
    <source>
    </source>
</evidence>
<evidence type="ECO:0000269" key="7">
    <source>
    </source>
</evidence>
<evidence type="ECO:0000269" key="8">
    <source>
    </source>
</evidence>
<evidence type="ECO:0000269" key="9">
    <source>
    </source>
</evidence>
<evidence type="ECO:0000269" key="10">
    <source>
    </source>
</evidence>
<evidence type="ECO:0000269" key="11">
    <source>
    </source>
</evidence>
<evidence type="ECO:0000303" key="12">
    <source>
    </source>
</evidence>
<evidence type="ECO:0000305" key="13"/>
<evidence type="ECO:0000312" key="14">
    <source>
        <dbReference type="EMBL" id="AAC24727.1"/>
    </source>
</evidence>
<sequence>MNAGICVCVLLAALSTSSCLSLPAVSEDGGQSDLGIVMEHTRHTRAAPSSGQLSLLSKAEDDEEPRSSLTELLARIISTKGTYRRSPSPKSKSMGNNHRIKDRDYLGWMDFGRRSAEEYEYSS</sequence>
<feature type="signal peptide" evidence="3">
    <location>
        <begin position="1"/>
        <end position="19"/>
    </location>
</feature>
<feature type="chain" id="PRO_0000042675" description="Cholecystokinin" evidence="3">
    <location>
        <begin position="20"/>
        <end position="123"/>
    </location>
</feature>
<feature type="propeptide" id="PRO_0000042676" evidence="3 12">
    <location>
        <begin position="20"/>
        <end position="103"/>
    </location>
</feature>
<feature type="peptide" id="PRO_0000042677" description="Cholecystokinin-69" evidence="13">
    <location>
        <begin position="43"/>
        <end position="111"/>
    </location>
</feature>
<feature type="peptide" id="PRO_0000042678" description="Cholecystokinin-36" evidence="13">
    <location>
        <begin position="76"/>
        <end position="111"/>
    </location>
</feature>
<feature type="peptide" id="PRO_0000042679" description="Cholecystokinin-26" evidence="13">
    <location>
        <begin position="86"/>
        <end position="111"/>
    </location>
</feature>
<feature type="peptide" id="PRO_0000042680" description="Cholecystokinin-12" evidence="13">
    <location>
        <begin position="100"/>
        <end position="111"/>
    </location>
</feature>
<feature type="peptide" id="PRO_0000042681" description="Cholecystokinin-8" evidence="13">
    <location>
        <begin position="104"/>
        <end position="111"/>
    </location>
</feature>
<feature type="propeptide" id="PRO_0000042682" evidence="3 12">
    <location>
        <begin position="115"/>
        <end position="123"/>
    </location>
</feature>
<feature type="region of interest" description="Disordered" evidence="4">
    <location>
        <begin position="43"/>
        <end position="67"/>
    </location>
</feature>
<feature type="modified residue" description="Sulfotyrosine" evidence="2">
    <location>
        <position position="105"/>
    </location>
</feature>
<feature type="modified residue" description="Phenylalanine amide" evidence="1">
    <location>
        <position position="111"/>
    </location>
</feature>
<feature type="modified residue" description="Sulfotyrosine" evidence="2">
    <location>
        <position position="119"/>
    </location>
</feature>
<feature type="modified residue" description="Sulfotyrosine" evidence="2">
    <location>
        <position position="121"/>
    </location>
</feature>
<reference evidence="13 14" key="1">
    <citation type="journal article" date="1998" name="Peptides">
        <title>Molecular cloning and expression of cDNA encoding brain preprocholecystokinin in goldfish.</title>
        <authorList>
            <person name="Peyon P.E.A."/>
            <person name="Lin X.W."/>
            <person name="Himick B.A."/>
            <person name="Peter R.E."/>
        </authorList>
    </citation>
    <scope>NUCLEOTIDE SEQUENCE [MRNA]</scope>
    <scope>TISSUE SPECIFICITY</scope>
    <source>
        <tissue evidence="11">Brain</tissue>
    </source>
</reference>
<reference evidence="13" key="2">
    <citation type="journal article" date="1993" name="Gen. Comp. Endocrinol.">
        <title>CCK/gastrin-like immunoreactivity in the goldfish pituitary: regulation of pituitary hormone secretion by CCK-like peptides in vitro.</title>
        <authorList>
            <person name="Himick B.A."/>
            <person name="Golosinski A.A."/>
            <person name="Jonsson A.-C."/>
            <person name="Peter R.E."/>
        </authorList>
    </citation>
    <scope>FUNCTION</scope>
    <scope>TISSUE SPECIFICITY</scope>
</reference>
<reference evidence="13" key="3">
    <citation type="journal article" date="1994" name="Am. J. Physiol.">
        <title>CCK/gastrin-like immunoreactivity in brain and gut, and CCK suppression of feeding in goldfish.</title>
        <authorList>
            <person name="Himick B.A."/>
            <person name="Peter R.E."/>
        </authorList>
    </citation>
    <scope>FUNCTION</scope>
    <scope>TISSUE SPECIFICITY</scope>
</reference>
<reference evidence="13" key="4">
    <citation type="journal article" date="1999" name="Brain Res. Mol. Brain Res.">
        <title>Postprandial, seasonal and sexual variations in cholecystokinin gene expression in goldfish brain.</title>
        <authorList>
            <person name="Peyon P.E.A."/>
            <person name="Saied H."/>
            <person name="Lin X.W."/>
            <person name="Peter R.E."/>
        </authorList>
    </citation>
    <scope>TISSUE SPECIFICITY</scope>
    <scope>DEVELOPMENTAL STAGE</scope>
</reference>
<reference evidence="13" key="5">
    <citation type="journal article" date="2002" name="J. Comp. Neurol.">
        <title>Distribution of cholecystokinin, calcitonin gene-related peptide, neuropeptide Y, and galanin in the primary gustatory nuclei of the goldfish.</title>
        <authorList>
            <person name="Farrell W.J."/>
            <person name="Boettger B."/>
            <person name="Ahmadi F."/>
            <person name="Finger T.E."/>
        </authorList>
    </citation>
    <scope>TISSUE SPECIFICITY</scope>
</reference>
<reference evidence="13" key="6">
    <citation type="journal article" date="2004" name="Brain Res.">
        <title>Effects of lipopolysaccharide treatment on feeding of goldfish: role of appetite-regulating peptides.</title>
        <authorList>
            <person name="Volkoff H."/>
            <person name="Peter R.E."/>
        </authorList>
    </citation>
    <scope>INDUCTION</scope>
</reference>
<reference evidence="13" key="7">
    <citation type="journal article" date="2004" name="Regul. Pept.">
        <title>Effects of cholecystokinin and bombesin on the expression of preprosomatostatin-encoding genes in goldfish forebrain.</title>
        <authorList>
            <person name="Canosa L.F."/>
            <person name="Peter R.E."/>
        </authorList>
    </citation>
    <scope>FUNCTION</scope>
</reference>
<name>CCKN_CARAU</name>
<accession>O93464</accession>
<comment type="function">
    <text evidence="2 8 9 10">This peptide hormone induces gall bladder contraction and the release of pancreatic enzymes in the gut (By similarity). Induces the secretion of gonadotropin and growth hormone from the pituitary. Suppresses food intake and decreases the expression of preprosomatostatin genes in the forebrain.</text>
</comment>
<comment type="subcellular location">
    <subcellularLocation>
        <location evidence="12 13">Secreted</location>
    </subcellularLocation>
</comment>
<comment type="tissue specificity">
    <text evidence="5 6 9 10 11">Expressed in the ovary, kidney, gill, gastrointestinal tract and pituitary. Differentially expressed in the brain in the optic tectum-thalamus, hypothalamus, telencephalon, olfactory bulb and tract, preoptic region and posterior brain region. Expression is strongest in the hypothalamus, where localization is to the posterior ventrolateral region. Expression in the brain is transiently increased 2 hours after feeding. Abundant in the sensory layers of the vagal lobe and along the border of the sensory region of the lobe and the deep fiber laye. Also present in the facial lobe and throughout the glossopharyngeal lobe.</text>
</comment>
<comment type="developmental stage">
    <text evidence="5">Expression in the brain shows variation throughout the seasonal sexual cycle; in the optic tectum-thalamus of females, expression levels are lower in early gonadal recrudescence (October) compared to other sexual stages. In males, expression is high in the olfactory bulbs in early gonadal recrudescence and low in the posterior brain in late gonadal recrudescence (January). Expression is higher in females than males in the telencephalon-preoptic region and posterior brain during late gonadal recrudescence, and in the olfactory bulbs and optic tectum-thalamus during the sexually mature (April), and post-spawning and sexually regressed (July) stages.</text>
</comment>
<comment type="induction">
    <text evidence="7">By lipopolysaccharide (LPS); in hypothalamus.</text>
</comment>
<comment type="PTM">
    <text evidence="1">The precursor is cleaved by proteases to produce a number of active cholecystokinins.</text>
</comment>
<comment type="similarity">
    <text evidence="2">Belongs to the gastrin/cholecystokinin family.</text>
</comment>
<proteinExistence type="evidence at transcript level"/>